<proteinExistence type="inferred from homology"/>
<accession>Q2VBN9</accession>
<reference key="1">
    <citation type="journal article" date="2006" name="Biochem. J.">
        <title>Novel genes encoding six kinds of three-finger toxins in Ophiophagus hannah (king cobra) and function characterization of two recombinant long-chain neurotoxins.</title>
        <authorList>
            <person name="Li J."/>
            <person name="Zhang H."/>
            <person name="Liu J."/>
            <person name="Xu K."/>
        </authorList>
    </citation>
    <scope>NUCLEOTIDE SEQUENCE [MRNA]</scope>
    <source>
        <tissue>Venom gland</tissue>
    </source>
</reference>
<sequence length="78" mass="8895">MKTLLLTFLVVTIVCLDLGYTLICHQVHGLQTCEPAQKFCQKRTTMFFPNHPVLLMGCTYNCPTERYSVCCSTDKCNK</sequence>
<keyword id="KW-0008">Acetylcholine receptor inhibiting toxin</keyword>
<keyword id="KW-1015">Disulfide bond</keyword>
<keyword id="KW-0872">Ion channel impairing toxin</keyword>
<keyword id="KW-0528">Neurotoxin</keyword>
<keyword id="KW-0629">Postsynaptic neurotoxin</keyword>
<keyword id="KW-0964">Secreted</keyword>
<keyword id="KW-0732">Signal</keyword>
<keyword id="KW-0800">Toxin</keyword>
<protein>
    <recommendedName>
        <fullName evidence="5">Short neurotoxin SNTX26</fullName>
    </recommendedName>
    <alternativeName>
        <fullName>Three-finger toxin</fullName>
        <shortName>3FTx</shortName>
    </alternativeName>
</protein>
<name>3SXQ_OPHHA</name>
<organism>
    <name type="scientific">Ophiophagus hannah</name>
    <name type="common">King cobra</name>
    <name type="synonym">Naja hannah</name>
    <dbReference type="NCBI Taxonomy" id="8665"/>
    <lineage>
        <taxon>Eukaryota</taxon>
        <taxon>Metazoa</taxon>
        <taxon>Chordata</taxon>
        <taxon>Craniata</taxon>
        <taxon>Vertebrata</taxon>
        <taxon>Euteleostomi</taxon>
        <taxon>Lepidosauria</taxon>
        <taxon>Squamata</taxon>
        <taxon>Bifurcata</taxon>
        <taxon>Unidentata</taxon>
        <taxon>Episquamata</taxon>
        <taxon>Toxicofera</taxon>
        <taxon>Serpentes</taxon>
        <taxon>Colubroidea</taxon>
        <taxon>Elapidae</taxon>
        <taxon>Elapinae</taxon>
        <taxon>Ophiophagus</taxon>
    </lineage>
</organism>
<dbReference type="EMBL" id="DQ273576">
    <property type="protein sequence ID" value="ABB83630.1"/>
    <property type="molecule type" value="mRNA"/>
</dbReference>
<dbReference type="SMR" id="Q2VBN9"/>
<dbReference type="GO" id="GO:0005576">
    <property type="term" value="C:extracellular region"/>
    <property type="evidence" value="ECO:0007669"/>
    <property type="project" value="UniProtKB-SubCell"/>
</dbReference>
<dbReference type="GO" id="GO:0030550">
    <property type="term" value="F:acetylcholine receptor inhibitor activity"/>
    <property type="evidence" value="ECO:0007669"/>
    <property type="project" value="UniProtKB-KW"/>
</dbReference>
<dbReference type="GO" id="GO:0099106">
    <property type="term" value="F:ion channel regulator activity"/>
    <property type="evidence" value="ECO:0007669"/>
    <property type="project" value="UniProtKB-KW"/>
</dbReference>
<dbReference type="GO" id="GO:0090729">
    <property type="term" value="F:toxin activity"/>
    <property type="evidence" value="ECO:0007669"/>
    <property type="project" value="UniProtKB-KW"/>
</dbReference>
<dbReference type="CDD" id="cd00206">
    <property type="entry name" value="TFP_snake_toxin"/>
    <property type="match status" value="1"/>
</dbReference>
<dbReference type="Gene3D" id="2.10.60.10">
    <property type="entry name" value="CD59"/>
    <property type="match status" value="1"/>
</dbReference>
<dbReference type="InterPro" id="IPR003571">
    <property type="entry name" value="Snake_3FTx"/>
</dbReference>
<dbReference type="InterPro" id="IPR045860">
    <property type="entry name" value="Snake_toxin-like_sf"/>
</dbReference>
<dbReference type="InterPro" id="IPR054131">
    <property type="entry name" value="Toxin_cobra-type"/>
</dbReference>
<dbReference type="Pfam" id="PF21947">
    <property type="entry name" value="Toxin_cobra-type"/>
    <property type="match status" value="1"/>
</dbReference>
<dbReference type="SUPFAM" id="SSF57302">
    <property type="entry name" value="Snake toxin-like"/>
    <property type="match status" value="1"/>
</dbReference>
<feature type="signal peptide" evidence="1">
    <location>
        <begin position="1"/>
        <end position="21"/>
    </location>
</feature>
<feature type="chain" id="PRO_5000006486" description="Short neurotoxin SNTX26">
    <location>
        <begin position="22"/>
        <end position="78"/>
    </location>
</feature>
<feature type="site" description="Important residue for inhibition of muscle alpha-1-beta-1-delta-epsilon (CHRNA1-CHRNB1-CHRND-CHRNE) and neuronal alpha-3-beta-2/CHRNA3-CHRNB2 nAChR" evidence="3">
    <location>
        <position position="28"/>
    </location>
</feature>
<feature type="site" description="Important residue for inhibition of muscle alpha-1-beta-1-delta-epsilon (CHRNA1-CHRNB1-CHRND-CHRNE) and neuronal alpha-3-beta-2/CHRNA3-CHRNB2 nAChR" evidence="3">
    <location>
        <position position="43"/>
    </location>
</feature>
<feature type="site" description="Key residue for inhibition of muscle alpha-1-beta-1-delta-epsilon (CHRNA1-CHRNB1-CHRND-CHRNE) nAChR" evidence="3">
    <location>
        <position position="44"/>
    </location>
</feature>
<feature type="site" description="Important residue for inhibition of muscle alpha-1-beta-1-delta-epsilon (CHRNA1-CHRNB1-CHRND-CHRNE) nAChR" evidence="3">
    <location>
        <position position="45"/>
    </location>
</feature>
<feature type="site" description="Key residue for inhibition of muscle alpha-1-beta-1-delta-epsilon (CHRNA1-CHRNB1-CHRND-CHRNE) and important for inhibition of neuronal alpha-3-beta-2/CHRNA3-CHRNB2 nAChR" evidence="3">
    <location>
        <position position="46"/>
    </location>
</feature>
<feature type="site" description="Important residue for inhibition of muscle alpha-1-beta-1-delta-epsilon (CHRNA1-CHRNB1-CHRND-CHRNE) nAChR" evidence="3">
    <location>
        <position position="47"/>
    </location>
</feature>
<feature type="site" description="Key residue for inhibition of muscle alpha-1-beta-1-delta-epsilon (CHRNA1-CHRNB1-CHRND-CHRNE) and important residue for inhibition of neuronal alpha-3-beta-2/CHRNA3-CHRNB2 nAChR" evidence="3">
    <location>
        <position position="48"/>
    </location>
</feature>
<feature type="site" description="Important residue for inhibition of muscle alpha-1-beta-1-delta-epsilon (CHRNA1-CHRNB1-CHRND-CHRNE) and neuronal alpha-3-beta-2/CHRNA3-CHRNB2 nAChR" evidence="3">
    <location>
        <position position="51"/>
    </location>
</feature>
<feature type="site" description="Important residue for inhibition of muscle alpha-1-beta-1-delta-epsilon (CHRNA1-CHRNB1-CHRND-CHRNE) and neuronal alpha-3-beta-2/CHRNA3-CHRNB2 nAChR" evidence="3">
    <location>
        <position position="66"/>
    </location>
</feature>
<feature type="site" description="Important residue for interaction with muscle alpha-1-beta-1-delta-epsilon (CHRNA1-CHRNB1-CHRND-CHRNE) and neuronal alpha-3-beta-2/CHRNA3-CHRNB2 nAChR" evidence="3">
    <location>
        <position position="67"/>
    </location>
</feature>
<feature type="disulfide bond" evidence="2">
    <location>
        <begin position="24"/>
        <end position="40"/>
    </location>
</feature>
<feature type="disulfide bond" evidence="2">
    <location>
        <begin position="33"/>
        <end position="58"/>
    </location>
</feature>
<feature type="disulfide bond" evidence="2">
    <location>
        <begin position="62"/>
        <end position="70"/>
    </location>
</feature>
<feature type="disulfide bond" evidence="2">
    <location>
        <begin position="71"/>
        <end position="76"/>
    </location>
</feature>
<comment type="function">
    <text evidence="3">This three-finger toxin binds and inhibits the nicotinic acetylcholine receptor (nAChR).</text>
</comment>
<comment type="subcellular location">
    <subcellularLocation>
        <location evidence="1">Secreted</location>
    </subcellularLocation>
</comment>
<comment type="tissue specificity">
    <text evidence="4">Expressed by the venom gland.</text>
</comment>
<comment type="miscellaneous">
    <text evidence="4">Is classified as a P-type cytotoxin, since a proline residue stands at position 49 (Pro-31 in standard classification).</text>
</comment>
<comment type="similarity">
    <text evidence="4">Belongs to the three-finger toxin family. Short-chain subfamily.</text>
</comment>
<evidence type="ECO:0000250" key="1"/>
<evidence type="ECO:0000250" key="2">
    <source>
        <dbReference type="UniProtKB" id="P0DKR6"/>
    </source>
</evidence>
<evidence type="ECO:0000250" key="3">
    <source>
        <dbReference type="UniProtKB" id="P83302"/>
    </source>
</evidence>
<evidence type="ECO:0000305" key="4"/>
<evidence type="ECO:0000312" key="5">
    <source>
        <dbReference type="EMBL" id="ABB83630.1"/>
    </source>
</evidence>